<feature type="chain" id="PRO_0000228210" description="Translation initiation factor IF-2">
    <location>
        <begin position="1"/>
        <end position="868"/>
    </location>
</feature>
<feature type="domain" description="tr-type G">
    <location>
        <begin position="368"/>
        <end position="537"/>
    </location>
</feature>
<feature type="region of interest" description="Disordered" evidence="3">
    <location>
        <begin position="156"/>
        <end position="177"/>
    </location>
</feature>
<feature type="region of interest" description="Disordered" evidence="3">
    <location>
        <begin position="199"/>
        <end position="269"/>
    </location>
</feature>
<feature type="region of interest" description="G1" evidence="1">
    <location>
        <begin position="377"/>
        <end position="384"/>
    </location>
</feature>
<feature type="region of interest" description="G2" evidence="1">
    <location>
        <begin position="402"/>
        <end position="406"/>
    </location>
</feature>
<feature type="region of interest" description="G3" evidence="1">
    <location>
        <begin position="423"/>
        <end position="426"/>
    </location>
</feature>
<feature type="region of interest" description="G4" evidence="1">
    <location>
        <begin position="477"/>
        <end position="480"/>
    </location>
</feature>
<feature type="region of interest" description="G5" evidence="1">
    <location>
        <begin position="513"/>
        <end position="515"/>
    </location>
</feature>
<feature type="compositionally biased region" description="Basic and acidic residues" evidence="3">
    <location>
        <begin position="156"/>
        <end position="166"/>
    </location>
</feature>
<feature type="compositionally biased region" description="Basic and acidic residues" evidence="3">
    <location>
        <begin position="199"/>
        <end position="209"/>
    </location>
</feature>
<feature type="compositionally biased region" description="Basic residues" evidence="3">
    <location>
        <begin position="249"/>
        <end position="260"/>
    </location>
</feature>
<feature type="binding site" evidence="2">
    <location>
        <begin position="377"/>
        <end position="384"/>
    </location>
    <ligand>
        <name>GTP</name>
        <dbReference type="ChEBI" id="CHEBI:37565"/>
    </ligand>
</feature>
<feature type="binding site" evidence="2">
    <location>
        <begin position="423"/>
        <end position="427"/>
    </location>
    <ligand>
        <name>GTP</name>
        <dbReference type="ChEBI" id="CHEBI:37565"/>
    </ligand>
</feature>
<feature type="binding site" evidence="2">
    <location>
        <begin position="477"/>
        <end position="480"/>
    </location>
    <ligand>
        <name>GTP</name>
        <dbReference type="ChEBI" id="CHEBI:37565"/>
    </ligand>
</feature>
<proteinExistence type="inferred from homology"/>
<sequence length="868" mass="94758">MADVTVKQLAQVVGIPVERLLNQLQEAGLSFTDDQQTVNEEQKRILLNHLKGSSNRDISAAPERITLRRKSMSQVTVGHDMHSGKTVNIEVRKKKTFIKRSAIPEQAEVEEPVVPPVVEEPVHEEITVVSEVSAETPELKETEEHPVIEPVAELDETVKEEEKINSEENTAESQDELTHANTDVIENLVDVVEETIPVSKKEEVKPEKVSKKKHLEQTDSDISEFKKGKKKPKYHTFEHDEEEQELHRRGGRSKFKKKKGTEKSDKYREAEETLTHGFALPTAPIVREVLIPETITVAELAKRMSVKAAEVIKVMMSLGAMATINQVIDQETSVIVVEEMGHKPIIIKEDAVETGLGEAISKGTKTEGRAPVVTIMGHVDHGKTSLLDYIRRTKVAAGEAGGITQHIGAYHVSTPKGNITFLDTPGHAAFTAMRARGAQATDIVILIVAADDGVKPQTIEAIQHAKAAKVPIIVAINKMDKPDADPERVMNELSVQEVIPEAWGGDTMFVNISAKSGMGIDDLLDAILLQSEVLELKAVTDGAAKGVVIESRLDKGRGPVATVLVQSGTLHKGDILLAGFQYGRVRALVSDNGDLVDSAGPSIPVEVLGLSAIPHAGDEAVVVPDEKKAREVALFRQGRFRDVKLARRQKTTIEGIMENMTATESKVLNIVLKADVQGSLEAISDALTKLSTDEVKVDVISSGVGGITESDVHLAIASNAILIGFNVRADGTAKRLAEQESVSIHYYSVIYDIVDQIKGALTGMLAPQFKEEIVGIAEVRDVFKSPKIGAIAGCMVIEGVVKRNNPIRVLRSNVVIYEGTLESLRRFKDDVLEVRQGFECGIGVKNYNDVKPGDLIEVFETVEIKRDL</sequence>
<protein>
    <recommendedName>
        <fullName evidence="2">Translation initiation factor IF-2</fullName>
    </recommendedName>
</protein>
<organism>
    <name type="scientific">Legionella pneumophila subsp. pneumophila (strain Philadelphia 1 / ATCC 33152 / DSM 7513)</name>
    <dbReference type="NCBI Taxonomy" id="272624"/>
    <lineage>
        <taxon>Bacteria</taxon>
        <taxon>Pseudomonadati</taxon>
        <taxon>Pseudomonadota</taxon>
        <taxon>Gammaproteobacteria</taxon>
        <taxon>Legionellales</taxon>
        <taxon>Legionellaceae</taxon>
        <taxon>Legionella</taxon>
    </lineage>
</organism>
<keyword id="KW-0963">Cytoplasm</keyword>
<keyword id="KW-0342">GTP-binding</keyword>
<keyword id="KW-0396">Initiation factor</keyword>
<keyword id="KW-0547">Nucleotide-binding</keyword>
<keyword id="KW-0648">Protein biosynthesis</keyword>
<keyword id="KW-1185">Reference proteome</keyword>
<dbReference type="EMBL" id="AE017354">
    <property type="protein sequence ID" value="AAU28823.1"/>
    <property type="molecule type" value="Genomic_DNA"/>
</dbReference>
<dbReference type="RefSeq" id="WP_010948462.1">
    <property type="nucleotide sequence ID" value="NC_002942.5"/>
</dbReference>
<dbReference type="RefSeq" id="YP_096770.1">
    <property type="nucleotide sequence ID" value="NC_002942.5"/>
</dbReference>
<dbReference type="SMR" id="Q5ZRV4"/>
<dbReference type="STRING" id="272624.lpg2772"/>
<dbReference type="PaxDb" id="272624-lpg2772"/>
<dbReference type="GeneID" id="57036770"/>
<dbReference type="KEGG" id="lpn:lpg2772"/>
<dbReference type="PATRIC" id="fig|272624.6.peg.2954"/>
<dbReference type="eggNOG" id="COG0532">
    <property type="taxonomic scope" value="Bacteria"/>
</dbReference>
<dbReference type="HOGENOM" id="CLU_006301_6_1_6"/>
<dbReference type="OrthoDB" id="9811804at2"/>
<dbReference type="Proteomes" id="UP000000609">
    <property type="component" value="Chromosome"/>
</dbReference>
<dbReference type="GO" id="GO:0005829">
    <property type="term" value="C:cytosol"/>
    <property type="evidence" value="ECO:0007669"/>
    <property type="project" value="TreeGrafter"/>
</dbReference>
<dbReference type="GO" id="GO:0005525">
    <property type="term" value="F:GTP binding"/>
    <property type="evidence" value="ECO:0007669"/>
    <property type="project" value="UniProtKB-KW"/>
</dbReference>
<dbReference type="GO" id="GO:0003924">
    <property type="term" value="F:GTPase activity"/>
    <property type="evidence" value="ECO:0007669"/>
    <property type="project" value="UniProtKB-UniRule"/>
</dbReference>
<dbReference type="GO" id="GO:0097216">
    <property type="term" value="F:guanosine tetraphosphate binding"/>
    <property type="evidence" value="ECO:0007669"/>
    <property type="project" value="UniProtKB-ARBA"/>
</dbReference>
<dbReference type="GO" id="GO:0003743">
    <property type="term" value="F:translation initiation factor activity"/>
    <property type="evidence" value="ECO:0007669"/>
    <property type="project" value="UniProtKB-UniRule"/>
</dbReference>
<dbReference type="CDD" id="cd01887">
    <property type="entry name" value="IF2_eIF5B"/>
    <property type="match status" value="1"/>
</dbReference>
<dbReference type="CDD" id="cd03702">
    <property type="entry name" value="IF2_mtIF2_II"/>
    <property type="match status" value="1"/>
</dbReference>
<dbReference type="CDD" id="cd03692">
    <property type="entry name" value="mtIF2_IVc"/>
    <property type="match status" value="1"/>
</dbReference>
<dbReference type="FunFam" id="2.40.30.10:FF:000007">
    <property type="entry name" value="Translation initiation factor IF-2"/>
    <property type="match status" value="1"/>
</dbReference>
<dbReference type="FunFam" id="2.40.30.10:FF:000008">
    <property type="entry name" value="Translation initiation factor IF-2"/>
    <property type="match status" value="1"/>
</dbReference>
<dbReference type="FunFam" id="3.40.50.10050:FF:000001">
    <property type="entry name" value="Translation initiation factor IF-2"/>
    <property type="match status" value="1"/>
</dbReference>
<dbReference type="FunFam" id="3.40.50.300:FF:000019">
    <property type="entry name" value="Translation initiation factor IF-2"/>
    <property type="match status" value="1"/>
</dbReference>
<dbReference type="Gene3D" id="3.40.50.300">
    <property type="entry name" value="P-loop containing nucleotide triphosphate hydrolases"/>
    <property type="match status" value="1"/>
</dbReference>
<dbReference type="Gene3D" id="3.30.56.50">
    <property type="entry name" value="Putative DNA-binding domain, N-terminal subdomain of bacterial translation initiation factor IF2"/>
    <property type="match status" value="1"/>
</dbReference>
<dbReference type="Gene3D" id="2.40.30.10">
    <property type="entry name" value="Translation factors"/>
    <property type="match status" value="2"/>
</dbReference>
<dbReference type="Gene3D" id="3.40.50.10050">
    <property type="entry name" value="Translation initiation factor IF- 2, domain 3"/>
    <property type="match status" value="1"/>
</dbReference>
<dbReference type="HAMAP" id="MF_00100_B">
    <property type="entry name" value="IF_2_B"/>
    <property type="match status" value="1"/>
</dbReference>
<dbReference type="InterPro" id="IPR009061">
    <property type="entry name" value="DNA-bd_dom_put_sf"/>
</dbReference>
<dbReference type="InterPro" id="IPR053905">
    <property type="entry name" value="EF-G-like_DII"/>
</dbReference>
<dbReference type="InterPro" id="IPR004161">
    <property type="entry name" value="EFTu-like_2"/>
</dbReference>
<dbReference type="InterPro" id="IPR013575">
    <property type="entry name" value="IF2_assoc_dom_bac"/>
</dbReference>
<dbReference type="InterPro" id="IPR044145">
    <property type="entry name" value="IF2_II"/>
</dbReference>
<dbReference type="InterPro" id="IPR006847">
    <property type="entry name" value="IF2_N"/>
</dbReference>
<dbReference type="InterPro" id="IPR027417">
    <property type="entry name" value="P-loop_NTPase"/>
</dbReference>
<dbReference type="InterPro" id="IPR005225">
    <property type="entry name" value="Small_GTP-bd"/>
</dbReference>
<dbReference type="InterPro" id="IPR000795">
    <property type="entry name" value="T_Tr_GTP-bd_dom"/>
</dbReference>
<dbReference type="InterPro" id="IPR000178">
    <property type="entry name" value="TF_IF2_bacterial-like"/>
</dbReference>
<dbReference type="InterPro" id="IPR015760">
    <property type="entry name" value="TIF_IF2"/>
</dbReference>
<dbReference type="InterPro" id="IPR023115">
    <property type="entry name" value="TIF_IF2_dom3"/>
</dbReference>
<dbReference type="InterPro" id="IPR036925">
    <property type="entry name" value="TIF_IF2_dom3_sf"/>
</dbReference>
<dbReference type="InterPro" id="IPR009000">
    <property type="entry name" value="Transl_B-barrel_sf"/>
</dbReference>
<dbReference type="NCBIfam" id="TIGR00487">
    <property type="entry name" value="IF-2"/>
    <property type="match status" value="1"/>
</dbReference>
<dbReference type="NCBIfam" id="TIGR00231">
    <property type="entry name" value="small_GTP"/>
    <property type="match status" value="1"/>
</dbReference>
<dbReference type="PANTHER" id="PTHR43381:SF5">
    <property type="entry name" value="TR-TYPE G DOMAIN-CONTAINING PROTEIN"/>
    <property type="match status" value="1"/>
</dbReference>
<dbReference type="PANTHER" id="PTHR43381">
    <property type="entry name" value="TRANSLATION INITIATION FACTOR IF-2-RELATED"/>
    <property type="match status" value="1"/>
</dbReference>
<dbReference type="Pfam" id="PF22042">
    <property type="entry name" value="EF-G_D2"/>
    <property type="match status" value="1"/>
</dbReference>
<dbReference type="Pfam" id="PF00009">
    <property type="entry name" value="GTP_EFTU"/>
    <property type="match status" value="1"/>
</dbReference>
<dbReference type="Pfam" id="PF03144">
    <property type="entry name" value="GTP_EFTU_D2"/>
    <property type="match status" value="1"/>
</dbReference>
<dbReference type="Pfam" id="PF11987">
    <property type="entry name" value="IF-2"/>
    <property type="match status" value="1"/>
</dbReference>
<dbReference type="Pfam" id="PF08364">
    <property type="entry name" value="IF2_assoc"/>
    <property type="match status" value="1"/>
</dbReference>
<dbReference type="Pfam" id="PF04760">
    <property type="entry name" value="IF2_N"/>
    <property type="match status" value="2"/>
</dbReference>
<dbReference type="SUPFAM" id="SSF52156">
    <property type="entry name" value="Initiation factor IF2/eIF5b, domain 3"/>
    <property type="match status" value="1"/>
</dbReference>
<dbReference type="SUPFAM" id="SSF52540">
    <property type="entry name" value="P-loop containing nucleoside triphosphate hydrolases"/>
    <property type="match status" value="1"/>
</dbReference>
<dbReference type="SUPFAM" id="SSF46955">
    <property type="entry name" value="Putative DNA-binding domain"/>
    <property type="match status" value="1"/>
</dbReference>
<dbReference type="SUPFAM" id="SSF50447">
    <property type="entry name" value="Translation proteins"/>
    <property type="match status" value="2"/>
</dbReference>
<dbReference type="PROSITE" id="PS51722">
    <property type="entry name" value="G_TR_2"/>
    <property type="match status" value="1"/>
</dbReference>
<dbReference type="PROSITE" id="PS01176">
    <property type="entry name" value="IF2"/>
    <property type="match status" value="1"/>
</dbReference>
<name>IF2_LEGPH</name>
<evidence type="ECO:0000250" key="1"/>
<evidence type="ECO:0000255" key="2">
    <source>
        <dbReference type="HAMAP-Rule" id="MF_00100"/>
    </source>
</evidence>
<evidence type="ECO:0000256" key="3">
    <source>
        <dbReference type="SAM" id="MobiDB-lite"/>
    </source>
</evidence>
<reference key="1">
    <citation type="journal article" date="2004" name="Science">
        <title>The genomic sequence of the accidental pathogen Legionella pneumophila.</title>
        <authorList>
            <person name="Chien M."/>
            <person name="Morozova I."/>
            <person name="Shi S."/>
            <person name="Sheng H."/>
            <person name="Chen J."/>
            <person name="Gomez S.M."/>
            <person name="Asamani G."/>
            <person name="Hill K."/>
            <person name="Nuara J."/>
            <person name="Feder M."/>
            <person name="Rineer J."/>
            <person name="Greenberg J.J."/>
            <person name="Steshenko V."/>
            <person name="Park S.H."/>
            <person name="Zhao B."/>
            <person name="Teplitskaya E."/>
            <person name="Edwards J.R."/>
            <person name="Pampou S."/>
            <person name="Georghiou A."/>
            <person name="Chou I.-C."/>
            <person name="Iannuccilli W."/>
            <person name="Ulz M.E."/>
            <person name="Kim D.H."/>
            <person name="Geringer-Sameth A."/>
            <person name="Goldsberry C."/>
            <person name="Morozov P."/>
            <person name="Fischer S.G."/>
            <person name="Segal G."/>
            <person name="Qu X."/>
            <person name="Rzhetsky A."/>
            <person name="Zhang P."/>
            <person name="Cayanis E."/>
            <person name="De Jong P.J."/>
            <person name="Ju J."/>
            <person name="Kalachikov S."/>
            <person name="Shuman H.A."/>
            <person name="Russo J.J."/>
        </authorList>
    </citation>
    <scope>NUCLEOTIDE SEQUENCE [LARGE SCALE GENOMIC DNA]</scope>
    <source>
        <strain>Philadelphia 1 / ATCC 33152 / DSM 7513</strain>
    </source>
</reference>
<comment type="function">
    <text evidence="2">One of the essential components for the initiation of protein synthesis. Protects formylmethionyl-tRNA from spontaneous hydrolysis and promotes its binding to the 30S ribosomal subunits. Also involved in the hydrolysis of GTP during the formation of the 70S ribosomal complex.</text>
</comment>
<comment type="subcellular location">
    <subcellularLocation>
        <location evidence="2">Cytoplasm</location>
    </subcellularLocation>
</comment>
<comment type="similarity">
    <text evidence="2">Belongs to the TRAFAC class translation factor GTPase superfamily. Classic translation factor GTPase family. IF-2 subfamily.</text>
</comment>
<gene>
    <name evidence="2" type="primary">infB</name>
    <name type="ordered locus">lpg2772</name>
</gene>
<accession>Q5ZRV4</accession>